<gene>
    <name evidence="1" type="primary">dnaA</name>
    <name type="ordered locus">BMASAVP1_A2848</name>
</gene>
<evidence type="ECO:0000255" key="1">
    <source>
        <dbReference type="HAMAP-Rule" id="MF_00377"/>
    </source>
</evidence>
<evidence type="ECO:0000256" key="2">
    <source>
        <dbReference type="SAM" id="MobiDB-lite"/>
    </source>
</evidence>
<sequence>MNDFWQHCSALLERELTPQQYVTWIKPLAPVAFDAAANTLSIAAPNRFKLDWVKSQFSGRISDLARDFWNAPIEVQFVLDPKAGQRSPAGATPLAPRAPLPSANPAPVAPGPACAPAVDAHAPAPAGMNAATAAAVAAAQAAQAAQANAAALNADEAADLDLPSLTAHEAAAGRRTWRPGAANANSEAADSMYERSKLNPVLTFDNFVTGKANQLARAAAIQVADNPGISYNPLFLYGGVGLGKTHLIHAIGNQLLLDKPGARIRYIHAEQYVSDVVKAYQRKAFDDFKRYYHSLDLLLIDDIQFFSGKSRTQEEFFYAFEALVANKAQVIITSDTYPKEISGIDDRLISRFDSGLTVAIEPPELEMRVAILMRKAQSEGVSLSEDVAFFVAKHLRSNVRELEGALRKILAYSKFHGREITIELTKEALKDLLTVQNRQISVENIQKTVADFYNIKVADMYSKKRPANIARPRQIAMYLAKELTQKSLPEIGELFGGRDHTTVLHAVRKIADERGKDAQLNHELHVLEQTLKG</sequence>
<dbReference type="EMBL" id="CP000526">
    <property type="protein sequence ID" value="ABM50329.1"/>
    <property type="molecule type" value="Genomic_DNA"/>
</dbReference>
<dbReference type="RefSeq" id="WP_004204805.1">
    <property type="nucleotide sequence ID" value="NC_008785.1"/>
</dbReference>
<dbReference type="SMR" id="A1V7D9"/>
<dbReference type="GeneID" id="93058586"/>
<dbReference type="KEGG" id="bmv:BMASAVP1_A2848"/>
<dbReference type="HOGENOM" id="CLU_026910_0_1_4"/>
<dbReference type="GO" id="GO:0005737">
    <property type="term" value="C:cytoplasm"/>
    <property type="evidence" value="ECO:0007669"/>
    <property type="project" value="UniProtKB-SubCell"/>
</dbReference>
<dbReference type="GO" id="GO:0005886">
    <property type="term" value="C:plasma membrane"/>
    <property type="evidence" value="ECO:0007669"/>
    <property type="project" value="TreeGrafter"/>
</dbReference>
<dbReference type="GO" id="GO:0005524">
    <property type="term" value="F:ATP binding"/>
    <property type="evidence" value="ECO:0007669"/>
    <property type="project" value="UniProtKB-UniRule"/>
</dbReference>
<dbReference type="GO" id="GO:0016887">
    <property type="term" value="F:ATP hydrolysis activity"/>
    <property type="evidence" value="ECO:0007669"/>
    <property type="project" value="InterPro"/>
</dbReference>
<dbReference type="GO" id="GO:0003688">
    <property type="term" value="F:DNA replication origin binding"/>
    <property type="evidence" value="ECO:0007669"/>
    <property type="project" value="UniProtKB-UniRule"/>
</dbReference>
<dbReference type="GO" id="GO:0008289">
    <property type="term" value="F:lipid binding"/>
    <property type="evidence" value="ECO:0007669"/>
    <property type="project" value="UniProtKB-KW"/>
</dbReference>
<dbReference type="GO" id="GO:0006270">
    <property type="term" value="P:DNA replication initiation"/>
    <property type="evidence" value="ECO:0007669"/>
    <property type="project" value="UniProtKB-UniRule"/>
</dbReference>
<dbReference type="GO" id="GO:0006275">
    <property type="term" value="P:regulation of DNA replication"/>
    <property type="evidence" value="ECO:0007669"/>
    <property type="project" value="UniProtKB-UniRule"/>
</dbReference>
<dbReference type="CDD" id="cd00009">
    <property type="entry name" value="AAA"/>
    <property type="match status" value="1"/>
</dbReference>
<dbReference type="CDD" id="cd06571">
    <property type="entry name" value="Bac_DnaA_C"/>
    <property type="match status" value="1"/>
</dbReference>
<dbReference type="FunFam" id="1.10.8.60:FF:000003">
    <property type="entry name" value="Chromosomal replication initiator protein DnaA"/>
    <property type="match status" value="1"/>
</dbReference>
<dbReference type="FunFam" id="3.40.50.300:FF:000668">
    <property type="entry name" value="Chromosomal replication initiator protein DnaA"/>
    <property type="match status" value="1"/>
</dbReference>
<dbReference type="Gene3D" id="1.10.1750.10">
    <property type="match status" value="1"/>
</dbReference>
<dbReference type="Gene3D" id="1.10.8.60">
    <property type="match status" value="1"/>
</dbReference>
<dbReference type="Gene3D" id="3.30.300.180">
    <property type="match status" value="1"/>
</dbReference>
<dbReference type="Gene3D" id="3.40.50.300">
    <property type="entry name" value="P-loop containing nucleotide triphosphate hydrolases"/>
    <property type="match status" value="1"/>
</dbReference>
<dbReference type="HAMAP" id="MF_00377">
    <property type="entry name" value="DnaA_bact"/>
    <property type="match status" value="1"/>
</dbReference>
<dbReference type="InterPro" id="IPR003593">
    <property type="entry name" value="AAA+_ATPase"/>
</dbReference>
<dbReference type="InterPro" id="IPR001957">
    <property type="entry name" value="Chromosome_initiator_DnaA"/>
</dbReference>
<dbReference type="InterPro" id="IPR020591">
    <property type="entry name" value="Chromosome_initiator_DnaA-like"/>
</dbReference>
<dbReference type="InterPro" id="IPR018312">
    <property type="entry name" value="Chromosome_initiator_DnaA_CS"/>
</dbReference>
<dbReference type="InterPro" id="IPR013159">
    <property type="entry name" value="DnaA_C"/>
</dbReference>
<dbReference type="InterPro" id="IPR013317">
    <property type="entry name" value="DnaA_dom"/>
</dbReference>
<dbReference type="InterPro" id="IPR024633">
    <property type="entry name" value="DnaA_N_dom"/>
</dbReference>
<dbReference type="InterPro" id="IPR038454">
    <property type="entry name" value="DnaA_N_sf"/>
</dbReference>
<dbReference type="InterPro" id="IPR055199">
    <property type="entry name" value="Hda_lid"/>
</dbReference>
<dbReference type="InterPro" id="IPR027417">
    <property type="entry name" value="P-loop_NTPase"/>
</dbReference>
<dbReference type="InterPro" id="IPR010921">
    <property type="entry name" value="Trp_repressor/repl_initiator"/>
</dbReference>
<dbReference type="NCBIfam" id="TIGR00362">
    <property type="entry name" value="DnaA"/>
    <property type="match status" value="1"/>
</dbReference>
<dbReference type="PANTHER" id="PTHR30050">
    <property type="entry name" value="CHROMOSOMAL REPLICATION INITIATOR PROTEIN DNAA"/>
    <property type="match status" value="1"/>
</dbReference>
<dbReference type="PANTHER" id="PTHR30050:SF2">
    <property type="entry name" value="CHROMOSOMAL REPLICATION INITIATOR PROTEIN DNAA"/>
    <property type="match status" value="1"/>
</dbReference>
<dbReference type="Pfam" id="PF00308">
    <property type="entry name" value="Bac_DnaA"/>
    <property type="match status" value="1"/>
</dbReference>
<dbReference type="Pfam" id="PF08299">
    <property type="entry name" value="Bac_DnaA_C"/>
    <property type="match status" value="1"/>
</dbReference>
<dbReference type="Pfam" id="PF11638">
    <property type="entry name" value="DnaA_N"/>
    <property type="match status" value="1"/>
</dbReference>
<dbReference type="Pfam" id="PF22688">
    <property type="entry name" value="Hda_lid"/>
    <property type="match status" value="1"/>
</dbReference>
<dbReference type="PRINTS" id="PR00051">
    <property type="entry name" value="DNAA"/>
</dbReference>
<dbReference type="SMART" id="SM00382">
    <property type="entry name" value="AAA"/>
    <property type="match status" value="1"/>
</dbReference>
<dbReference type="SMART" id="SM00760">
    <property type="entry name" value="Bac_DnaA_C"/>
    <property type="match status" value="1"/>
</dbReference>
<dbReference type="SUPFAM" id="SSF52540">
    <property type="entry name" value="P-loop containing nucleoside triphosphate hydrolases"/>
    <property type="match status" value="1"/>
</dbReference>
<dbReference type="SUPFAM" id="SSF48295">
    <property type="entry name" value="TrpR-like"/>
    <property type="match status" value="1"/>
</dbReference>
<dbReference type="PROSITE" id="PS01008">
    <property type="entry name" value="DNAA"/>
    <property type="match status" value="1"/>
</dbReference>
<name>DNAA_BURMS</name>
<organism>
    <name type="scientific">Burkholderia mallei (strain SAVP1)</name>
    <dbReference type="NCBI Taxonomy" id="320388"/>
    <lineage>
        <taxon>Bacteria</taxon>
        <taxon>Pseudomonadati</taxon>
        <taxon>Pseudomonadota</taxon>
        <taxon>Betaproteobacteria</taxon>
        <taxon>Burkholderiales</taxon>
        <taxon>Burkholderiaceae</taxon>
        <taxon>Burkholderia</taxon>
        <taxon>pseudomallei group</taxon>
    </lineage>
</organism>
<feature type="chain" id="PRO_1000048617" description="Chromosomal replication initiator protein DnaA">
    <location>
        <begin position="1"/>
        <end position="533"/>
    </location>
</feature>
<feature type="region of interest" description="Domain I, interacts with DnaA modulators" evidence="1">
    <location>
        <begin position="1"/>
        <end position="72"/>
    </location>
</feature>
<feature type="region of interest" description="Domain II" evidence="1">
    <location>
        <begin position="72"/>
        <end position="196"/>
    </location>
</feature>
<feature type="region of interest" description="Disordered" evidence="2">
    <location>
        <begin position="83"/>
        <end position="113"/>
    </location>
</feature>
<feature type="region of interest" description="Domain III, AAA+ region" evidence="1">
    <location>
        <begin position="197"/>
        <end position="413"/>
    </location>
</feature>
<feature type="region of interest" description="Domain IV, binds dsDNA" evidence="1">
    <location>
        <begin position="414"/>
        <end position="533"/>
    </location>
</feature>
<feature type="compositionally biased region" description="Pro residues" evidence="2">
    <location>
        <begin position="96"/>
        <end position="110"/>
    </location>
</feature>
<feature type="binding site" evidence="1">
    <location>
        <position position="241"/>
    </location>
    <ligand>
        <name>ATP</name>
        <dbReference type="ChEBI" id="CHEBI:30616"/>
    </ligand>
</feature>
<feature type="binding site" evidence="1">
    <location>
        <position position="243"/>
    </location>
    <ligand>
        <name>ATP</name>
        <dbReference type="ChEBI" id="CHEBI:30616"/>
    </ligand>
</feature>
<feature type="binding site" evidence="1">
    <location>
        <position position="244"/>
    </location>
    <ligand>
        <name>ATP</name>
        <dbReference type="ChEBI" id="CHEBI:30616"/>
    </ligand>
</feature>
<feature type="binding site" evidence="1">
    <location>
        <position position="245"/>
    </location>
    <ligand>
        <name>ATP</name>
        <dbReference type="ChEBI" id="CHEBI:30616"/>
    </ligand>
</feature>
<proteinExistence type="inferred from homology"/>
<protein>
    <recommendedName>
        <fullName evidence="1">Chromosomal replication initiator protein DnaA</fullName>
    </recommendedName>
</protein>
<keyword id="KW-0067">ATP-binding</keyword>
<keyword id="KW-0963">Cytoplasm</keyword>
<keyword id="KW-0235">DNA replication</keyword>
<keyword id="KW-0238">DNA-binding</keyword>
<keyword id="KW-0446">Lipid-binding</keyword>
<keyword id="KW-0547">Nucleotide-binding</keyword>
<reference key="1">
    <citation type="journal article" date="2010" name="Genome Biol. Evol.">
        <title>Continuing evolution of Burkholderia mallei through genome reduction and large-scale rearrangements.</title>
        <authorList>
            <person name="Losada L."/>
            <person name="Ronning C.M."/>
            <person name="DeShazer D."/>
            <person name="Woods D."/>
            <person name="Fedorova N."/>
            <person name="Kim H.S."/>
            <person name="Shabalina S.A."/>
            <person name="Pearson T.R."/>
            <person name="Brinkac L."/>
            <person name="Tan P."/>
            <person name="Nandi T."/>
            <person name="Crabtree J."/>
            <person name="Badger J."/>
            <person name="Beckstrom-Sternberg S."/>
            <person name="Saqib M."/>
            <person name="Schutzer S.E."/>
            <person name="Keim P."/>
            <person name="Nierman W.C."/>
        </authorList>
    </citation>
    <scope>NUCLEOTIDE SEQUENCE [LARGE SCALE GENOMIC DNA]</scope>
    <source>
        <strain>SAVP1</strain>
    </source>
</reference>
<comment type="function">
    <text evidence="1">Plays an essential role in the initiation and regulation of chromosomal replication. ATP-DnaA binds to the origin of replication (oriC) to initiate formation of the DNA replication initiation complex once per cell cycle. Binds the DnaA box (a 9 base pair repeat at the origin) and separates the double-stranded (ds)DNA. Forms a right-handed helical filament on oriC DNA; dsDNA binds to the exterior of the filament while single-stranded (ss)DNA is stabiized in the filament's interior. The ATP-DnaA-oriC complex binds and stabilizes one strand of the AT-rich DNA unwinding element (DUE), permitting loading of DNA polymerase. After initiation quickly degrades to an ADP-DnaA complex that is not apt for DNA replication. Binds acidic phospholipids.</text>
</comment>
<comment type="subunit">
    <text evidence="1">Oligomerizes as a right-handed, spiral filament on DNA at oriC.</text>
</comment>
<comment type="subcellular location">
    <subcellularLocation>
        <location evidence="1">Cytoplasm</location>
    </subcellularLocation>
</comment>
<comment type="domain">
    <text evidence="1">Domain I is involved in oligomerization and binding regulators, domain II is flexibile and of varying length in different bacteria, domain III forms the AAA+ region, while domain IV binds dsDNA.</text>
</comment>
<comment type="similarity">
    <text evidence="1">Belongs to the DnaA family.</text>
</comment>
<accession>A1V7D9</accession>